<comment type="function">
    <text evidence="2">Pore-forming toxin that lyses bovine erythrocytes at nanomolar concentrations. Is devoid of enzymatic activity. Binds to monolayers and efficiently permeabilizes small lipid vesicles composed of sphingomyelin and cholesterol. The cytolytic activity is not prevented by cholesterol or sphingomyelin.</text>
</comment>
<comment type="subcellular location">
    <subcellularLocation>
        <location evidence="2">Secreted</location>
    </subcellularLocation>
    <subcellularLocation>
        <location evidence="2">Nematocyst</location>
    </subcellularLocation>
    <subcellularLocation>
        <location evidence="2">Target cell membrane</location>
    </subcellularLocation>
    <text>Forms a membrane channel in the prey.</text>
</comment>
<sequence length="29" mass="3080">DEQTGSKGPNENLPSQKDLXAKASXLTEV</sequence>
<proteinExistence type="evidence at protein level"/>
<protein>
    <recommendedName>
        <fullName>Cytolysin Uc-1</fullName>
        <shortName evidence="3">UcI</shortName>
    </recommendedName>
</protein>
<keyword id="KW-0204">Cytolysis</keyword>
<keyword id="KW-0903">Direct protein sequencing</keyword>
<keyword id="KW-0354">Hemolysis</keyword>
<keyword id="KW-0406">Ion transport</keyword>
<keyword id="KW-0472">Membrane</keyword>
<keyword id="KW-0166">Nematocyst</keyword>
<keyword id="KW-0964">Secreted</keyword>
<keyword id="KW-1052">Target cell membrane</keyword>
<keyword id="KW-1053">Target membrane</keyword>
<keyword id="KW-0800">Toxin</keyword>
<keyword id="KW-0812">Transmembrane</keyword>
<keyword id="KW-0813">Transport</keyword>
<organism>
    <name type="scientific">Urticina crassicornis</name>
    <name type="common">Mottled anemone</name>
    <name type="synonym">Tealia crassicornis</name>
    <dbReference type="NCBI Taxonomy" id="45621"/>
    <lineage>
        <taxon>Eukaryota</taxon>
        <taxon>Metazoa</taxon>
        <taxon>Cnidaria</taxon>
        <taxon>Anthozoa</taxon>
        <taxon>Hexacorallia</taxon>
        <taxon>Actiniaria</taxon>
        <taxon>Actiniidae</taxon>
        <taxon>Urticina</taxon>
    </lineage>
</organism>
<name>UC1_URTCR</name>
<feature type="chain" id="PRO_0000395600" description="Cytolysin Uc-1">
    <location>
        <begin position="1"/>
        <end position="29" status="greater than"/>
    </location>
</feature>
<feature type="region of interest" description="Disordered" evidence="1">
    <location>
        <begin position="1"/>
        <end position="29"/>
    </location>
</feature>
<feature type="compositionally biased region" description="Polar residues" evidence="1">
    <location>
        <begin position="1"/>
        <end position="15"/>
    </location>
</feature>
<feature type="non-terminal residue">
    <location>
        <position position="29"/>
    </location>
</feature>
<evidence type="ECO:0000256" key="1">
    <source>
        <dbReference type="SAM" id="MobiDB-lite"/>
    </source>
</evidence>
<evidence type="ECO:0000269" key="2">
    <source>
    </source>
</evidence>
<evidence type="ECO:0000303" key="3">
    <source>
    </source>
</evidence>
<dbReference type="GO" id="GO:0005576">
    <property type="term" value="C:extracellular region"/>
    <property type="evidence" value="ECO:0007669"/>
    <property type="project" value="UniProtKB-SubCell"/>
</dbReference>
<dbReference type="GO" id="GO:0016020">
    <property type="term" value="C:membrane"/>
    <property type="evidence" value="ECO:0007669"/>
    <property type="project" value="UniProtKB-KW"/>
</dbReference>
<dbReference type="GO" id="GO:0042151">
    <property type="term" value="C:nematocyst"/>
    <property type="evidence" value="ECO:0007669"/>
    <property type="project" value="UniProtKB-SubCell"/>
</dbReference>
<dbReference type="GO" id="GO:0044218">
    <property type="term" value="C:other organism cell membrane"/>
    <property type="evidence" value="ECO:0007669"/>
    <property type="project" value="UniProtKB-KW"/>
</dbReference>
<dbReference type="GO" id="GO:0090729">
    <property type="term" value="F:toxin activity"/>
    <property type="evidence" value="ECO:0007669"/>
    <property type="project" value="UniProtKB-KW"/>
</dbReference>
<dbReference type="GO" id="GO:0031640">
    <property type="term" value="P:killing of cells of another organism"/>
    <property type="evidence" value="ECO:0007669"/>
    <property type="project" value="UniProtKB-KW"/>
</dbReference>
<dbReference type="GO" id="GO:0006811">
    <property type="term" value="P:monoatomic ion transport"/>
    <property type="evidence" value="ECO:0007669"/>
    <property type="project" value="UniProtKB-KW"/>
</dbReference>
<accession>P0CG44</accession>
<reference key="1">
    <citation type="journal article" date="2009" name="Toxicon">
        <title>A new cytolytic protein from the sea anemone Urticina crassicornis that binds to cholesterol- and sphingomyelin-rich membranes.</title>
        <authorList>
            <person name="Razpotnik A."/>
            <person name="Krizaj I."/>
            <person name="Kem W.R."/>
            <person name="Macek P."/>
            <person name="Turk T."/>
        </authorList>
    </citation>
    <scope>PROTEIN SEQUENCE</scope>
    <scope>FUNCTION</scope>
    <scope>SUBCELLULAR LOCATION</scope>
</reference>